<protein>
    <recommendedName>
        <fullName evidence="1">Translation initiation factor IF-1</fullName>
    </recommendedName>
</protein>
<feature type="chain" id="PRO_0000263762" description="Translation initiation factor IF-1">
    <location>
        <begin position="1"/>
        <end position="78"/>
    </location>
</feature>
<feature type="domain" description="S1-like" evidence="1">
    <location>
        <begin position="2"/>
        <end position="78"/>
    </location>
</feature>
<comment type="function">
    <text evidence="1">One of the essential components for the initiation of protein synthesis. Stabilizes the binding of IF-2 and IF-3 on the 30S subunit to which N-formylmethionyl-tRNA(fMet) subsequently binds. Helps modulate mRNA selection, yielding the 30S pre-initiation complex (PIC). Upon addition of the 50S ribosomal subunit IF-1, IF-2 and IF-3 are released leaving the mature 70S translation initiation complex.</text>
</comment>
<comment type="subunit">
    <text evidence="1">Component of the 30S ribosomal translation pre-initiation complex which assembles on the 30S ribosome in the order IF-2 and IF-3, IF-1 and N-formylmethionyl-tRNA(fMet); mRNA recruitment can occur at any time during PIC assembly.</text>
</comment>
<comment type="subcellular location">
    <subcellularLocation>
        <location evidence="1">Cytoplasm</location>
    </subcellularLocation>
</comment>
<comment type="similarity">
    <text evidence="1">Belongs to the IF-1 family.</text>
</comment>
<sequence length="78" mass="9082">MSKNNLNETESKIEIEAKVVELLSNDKFKVELPNKKTIIAYVSGKIRINNIRILPGDKVRIELSPYYPTQARITYRFK</sequence>
<dbReference type="EMBL" id="CP000061">
    <property type="protein sequence ID" value="ABC65616.1"/>
    <property type="molecule type" value="Genomic_DNA"/>
</dbReference>
<dbReference type="RefSeq" id="WP_011412778.1">
    <property type="nucleotide sequence ID" value="NC_007716.1"/>
</dbReference>
<dbReference type="SMR" id="Q2NIX7"/>
<dbReference type="STRING" id="322098.AYWB_499"/>
<dbReference type="KEGG" id="ayw:AYWB_499"/>
<dbReference type="eggNOG" id="COG0361">
    <property type="taxonomic scope" value="Bacteria"/>
</dbReference>
<dbReference type="HOGENOM" id="CLU_151267_1_0_14"/>
<dbReference type="OrthoDB" id="9803250at2"/>
<dbReference type="PhylomeDB" id="Q2NIX7"/>
<dbReference type="Proteomes" id="UP000001934">
    <property type="component" value="Chromosome"/>
</dbReference>
<dbReference type="GO" id="GO:0005829">
    <property type="term" value="C:cytosol"/>
    <property type="evidence" value="ECO:0007669"/>
    <property type="project" value="TreeGrafter"/>
</dbReference>
<dbReference type="GO" id="GO:0043022">
    <property type="term" value="F:ribosome binding"/>
    <property type="evidence" value="ECO:0007669"/>
    <property type="project" value="UniProtKB-UniRule"/>
</dbReference>
<dbReference type="GO" id="GO:0019843">
    <property type="term" value="F:rRNA binding"/>
    <property type="evidence" value="ECO:0007669"/>
    <property type="project" value="UniProtKB-UniRule"/>
</dbReference>
<dbReference type="GO" id="GO:0003743">
    <property type="term" value="F:translation initiation factor activity"/>
    <property type="evidence" value="ECO:0007669"/>
    <property type="project" value="UniProtKB-UniRule"/>
</dbReference>
<dbReference type="CDD" id="cd04451">
    <property type="entry name" value="S1_IF1"/>
    <property type="match status" value="1"/>
</dbReference>
<dbReference type="FunFam" id="2.40.50.140:FF:000002">
    <property type="entry name" value="Translation initiation factor IF-1"/>
    <property type="match status" value="1"/>
</dbReference>
<dbReference type="Gene3D" id="2.40.50.140">
    <property type="entry name" value="Nucleic acid-binding proteins"/>
    <property type="match status" value="1"/>
</dbReference>
<dbReference type="HAMAP" id="MF_00075">
    <property type="entry name" value="IF_1"/>
    <property type="match status" value="1"/>
</dbReference>
<dbReference type="InterPro" id="IPR012340">
    <property type="entry name" value="NA-bd_OB-fold"/>
</dbReference>
<dbReference type="InterPro" id="IPR006196">
    <property type="entry name" value="RNA-binding_domain_S1_IF1"/>
</dbReference>
<dbReference type="InterPro" id="IPR004368">
    <property type="entry name" value="TIF_IF1"/>
</dbReference>
<dbReference type="NCBIfam" id="TIGR00008">
    <property type="entry name" value="infA"/>
    <property type="match status" value="1"/>
</dbReference>
<dbReference type="PANTHER" id="PTHR33370">
    <property type="entry name" value="TRANSLATION INITIATION FACTOR IF-1, CHLOROPLASTIC"/>
    <property type="match status" value="1"/>
</dbReference>
<dbReference type="PANTHER" id="PTHR33370:SF1">
    <property type="entry name" value="TRANSLATION INITIATION FACTOR IF-1, CHLOROPLASTIC"/>
    <property type="match status" value="1"/>
</dbReference>
<dbReference type="Pfam" id="PF01176">
    <property type="entry name" value="eIF-1a"/>
    <property type="match status" value="1"/>
</dbReference>
<dbReference type="SUPFAM" id="SSF50249">
    <property type="entry name" value="Nucleic acid-binding proteins"/>
    <property type="match status" value="1"/>
</dbReference>
<dbReference type="PROSITE" id="PS50832">
    <property type="entry name" value="S1_IF1_TYPE"/>
    <property type="match status" value="1"/>
</dbReference>
<evidence type="ECO:0000255" key="1">
    <source>
        <dbReference type="HAMAP-Rule" id="MF_00075"/>
    </source>
</evidence>
<reference key="1">
    <citation type="journal article" date="2006" name="J. Bacteriol.">
        <title>Living with genome instability: the adaptation of phytoplasmas to diverse environments of their insect and plant hosts.</title>
        <authorList>
            <person name="Bai X."/>
            <person name="Zhang J."/>
            <person name="Ewing A."/>
            <person name="Miller S.A."/>
            <person name="Jancso Radek A."/>
            <person name="Shevchenko D.V."/>
            <person name="Tsukerman K."/>
            <person name="Walunas T."/>
            <person name="Lapidus A."/>
            <person name="Campbell J.W."/>
            <person name="Hogenhout S.A."/>
        </authorList>
    </citation>
    <scope>NUCLEOTIDE SEQUENCE [LARGE SCALE GENOMIC DNA]</scope>
    <source>
        <strain>AYWB</strain>
    </source>
</reference>
<name>IF1_AYWBP</name>
<accession>Q2NIX7</accession>
<proteinExistence type="inferred from homology"/>
<gene>
    <name evidence="1" type="primary">infA</name>
    <name type="ordered locus">AYWB_499</name>
</gene>
<keyword id="KW-0963">Cytoplasm</keyword>
<keyword id="KW-0396">Initiation factor</keyword>
<keyword id="KW-0648">Protein biosynthesis</keyword>
<keyword id="KW-0694">RNA-binding</keyword>
<keyword id="KW-0699">rRNA-binding</keyword>
<organism>
    <name type="scientific">Aster yellows witches'-broom phytoplasma (strain AYWB)</name>
    <dbReference type="NCBI Taxonomy" id="322098"/>
    <lineage>
        <taxon>Bacteria</taxon>
        <taxon>Bacillati</taxon>
        <taxon>Mycoplasmatota</taxon>
        <taxon>Mollicutes</taxon>
        <taxon>Acholeplasmatales</taxon>
        <taxon>Acholeplasmataceae</taxon>
        <taxon>Candidatus Phytoplasma</taxon>
        <taxon>16SrI (Aster yellows group)</taxon>
    </lineage>
</organism>